<proteinExistence type="inferred from homology"/>
<keyword id="KW-0963">Cytoplasm</keyword>
<keyword id="KW-0251">Elongation factor</keyword>
<keyword id="KW-0342">GTP-binding</keyword>
<keyword id="KW-0378">Hydrolase</keyword>
<keyword id="KW-0460">Magnesium</keyword>
<keyword id="KW-0479">Metal-binding</keyword>
<keyword id="KW-0547">Nucleotide-binding</keyword>
<keyword id="KW-0648">Protein biosynthesis</keyword>
<protein>
    <recommendedName>
        <fullName evidence="2">Elongation factor Tu</fullName>
        <shortName evidence="2">EF-Tu</shortName>
        <ecNumber evidence="2">3.6.5.3</ecNumber>
    </recommendedName>
</protein>
<evidence type="ECO:0000250" key="1"/>
<evidence type="ECO:0000255" key="2">
    <source>
        <dbReference type="HAMAP-Rule" id="MF_00118"/>
    </source>
</evidence>
<accession>Q3JMP6</accession>
<name>EFTU_BURP1</name>
<sequence length="396" mass="42991">MAKEKFERTKPHVNVGTIGHVDHGKTTLTAAIATVLSAKFGGEAKKYDEIDAAPEEKARGITINTAHIEYETANRHYAHVDCPGHADYVKNMITGAAQMDGAILVCSAADGPMPQTREHILLARQVGVPYIIVFLNKCDMVDDAELLELVEMEVRELLSKYDFPGDDTPIIKGSAKLALEGDKGELGEVAIMNLADALDTYIPTPERAVDGAFLMPVEDVFSISGRGTVVTGRVERGVIKVGEEIEIVGIKATAKTTCTGVEMFRKLLDQGQAGDNVGILLRGTKREDVERGQVLAKPGSITPHTHFTAEVYVLSKDEGGRHTPFFNNYRPQFYFRTTDVTGSIELPKDKEMVMPGDNVSITVKLIAPIAMEEGLRFAIREGGRTVGAGVVAKIIE</sequence>
<feature type="chain" id="PRO_0000337343" description="Elongation factor Tu">
    <location>
        <begin position="1"/>
        <end position="396"/>
    </location>
</feature>
<feature type="domain" description="tr-type G">
    <location>
        <begin position="10"/>
        <end position="206"/>
    </location>
</feature>
<feature type="region of interest" description="G1" evidence="1">
    <location>
        <begin position="19"/>
        <end position="26"/>
    </location>
</feature>
<feature type="region of interest" description="G2" evidence="1">
    <location>
        <begin position="60"/>
        <end position="64"/>
    </location>
</feature>
<feature type="region of interest" description="G3" evidence="1">
    <location>
        <begin position="81"/>
        <end position="84"/>
    </location>
</feature>
<feature type="region of interest" description="G4" evidence="1">
    <location>
        <begin position="136"/>
        <end position="139"/>
    </location>
</feature>
<feature type="region of interest" description="G5" evidence="1">
    <location>
        <begin position="174"/>
        <end position="176"/>
    </location>
</feature>
<feature type="binding site" evidence="2">
    <location>
        <begin position="19"/>
        <end position="26"/>
    </location>
    <ligand>
        <name>GTP</name>
        <dbReference type="ChEBI" id="CHEBI:37565"/>
    </ligand>
</feature>
<feature type="binding site" evidence="2">
    <location>
        <position position="26"/>
    </location>
    <ligand>
        <name>Mg(2+)</name>
        <dbReference type="ChEBI" id="CHEBI:18420"/>
    </ligand>
</feature>
<feature type="binding site" evidence="2">
    <location>
        <begin position="81"/>
        <end position="85"/>
    </location>
    <ligand>
        <name>GTP</name>
        <dbReference type="ChEBI" id="CHEBI:37565"/>
    </ligand>
</feature>
<feature type="binding site" evidence="2">
    <location>
        <begin position="136"/>
        <end position="139"/>
    </location>
    <ligand>
        <name>GTP</name>
        <dbReference type="ChEBI" id="CHEBI:37565"/>
    </ligand>
</feature>
<dbReference type="EC" id="3.6.5.3" evidence="2"/>
<dbReference type="EMBL" id="CP000124">
    <property type="protein sequence ID" value="ABA50121.1"/>
    <property type="molecule type" value="Genomic_DNA"/>
</dbReference>
<dbReference type="EMBL" id="CP000124">
    <property type="protein sequence ID" value="ABA51030.1"/>
    <property type="molecule type" value="Genomic_DNA"/>
</dbReference>
<dbReference type="SMR" id="Q3JMP6"/>
<dbReference type="EnsemblBacteria" id="ABA50121">
    <property type="protein sequence ID" value="ABA50121"/>
    <property type="gene ID" value="BURPS1710b_3778"/>
</dbReference>
<dbReference type="EnsemblBacteria" id="ABA51030">
    <property type="protein sequence ID" value="ABA51030"/>
    <property type="gene ID" value="BURPS1710b_3794"/>
</dbReference>
<dbReference type="KEGG" id="bpm:BURPS1710b_3778"/>
<dbReference type="KEGG" id="bpm:BURPS1710b_3794"/>
<dbReference type="HOGENOM" id="CLU_007265_0_0_4"/>
<dbReference type="Proteomes" id="UP000002700">
    <property type="component" value="Chromosome I"/>
</dbReference>
<dbReference type="GO" id="GO:0005737">
    <property type="term" value="C:cytoplasm"/>
    <property type="evidence" value="ECO:0007669"/>
    <property type="project" value="UniProtKB-SubCell"/>
</dbReference>
<dbReference type="GO" id="GO:0005525">
    <property type="term" value="F:GTP binding"/>
    <property type="evidence" value="ECO:0007669"/>
    <property type="project" value="UniProtKB-UniRule"/>
</dbReference>
<dbReference type="GO" id="GO:0003924">
    <property type="term" value="F:GTPase activity"/>
    <property type="evidence" value="ECO:0007669"/>
    <property type="project" value="InterPro"/>
</dbReference>
<dbReference type="GO" id="GO:0097216">
    <property type="term" value="F:guanosine tetraphosphate binding"/>
    <property type="evidence" value="ECO:0007669"/>
    <property type="project" value="UniProtKB-ARBA"/>
</dbReference>
<dbReference type="GO" id="GO:0003746">
    <property type="term" value="F:translation elongation factor activity"/>
    <property type="evidence" value="ECO:0007669"/>
    <property type="project" value="UniProtKB-UniRule"/>
</dbReference>
<dbReference type="CDD" id="cd01884">
    <property type="entry name" value="EF_Tu"/>
    <property type="match status" value="1"/>
</dbReference>
<dbReference type="CDD" id="cd03697">
    <property type="entry name" value="EFTU_II"/>
    <property type="match status" value="1"/>
</dbReference>
<dbReference type="CDD" id="cd03707">
    <property type="entry name" value="EFTU_III"/>
    <property type="match status" value="1"/>
</dbReference>
<dbReference type="FunFam" id="2.40.30.10:FF:000001">
    <property type="entry name" value="Elongation factor Tu"/>
    <property type="match status" value="1"/>
</dbReference>
<dbReference type="FunFam" id="3.40.50.300:FF:000003">
    <property type="entry name" value="Elongation factor Tu"/>
    <property type="match status" value="1"/>
</dbReference>
<dbReference type="Gene3D" id="3.40.50.300">
    <property type="entry name" value="P-loop containing nucleotide triphosphate hydrolases"/>
    <property type="match status" value="1"/>
</dbReference>
<dbReference type="Gene3D" id="2.40.30.10">
    <property type="entry name" value="Translation factors"/>
    <property type="match status" value="2"/>
</dbReference>
<dbReference type="HAMAP" id="MF_00118_B">
    <property type="entry name" value="EF_Tu_B"/>
    <property type="match status" value="1"/>
</dbReference>
<dbReference type="InterPro" id="IPR041709">
    <property type="entry name" value="EF-Tu_GTP-bd"/>
</dbReference>
<dbReference type="InterPro" id="IPR050055">
    <property type="entry name" value="EF-Tu_GTPase"/>
</dbReference>
<dbReference type="InterPro" id="IPR004161">
    <property type="entry name" value="EFTu-like_2"/>
</dbReference>
<dbReference type="InterPro" id="IPR033720">
    <property type="entry name" value="EFTU_2"/>
</dbReference>
<dbReference type="InterPro" id="IPR031157">
    <property type="entry name" value="G_TR_CS"/>
</dbReference>
<dbReference type="InterPro" id="IPR027417">
    <property type="entry name" value="P-loop_NTPase"/>
</dbReference>
<dbReference type="InterPro" id="IPR005225">
    <property type="entry name" value="Small_GTP-bd"/>
</dbReference>
<dbReference type="InterPro" id="IPR000795">
    <property type="entry name" value="T_Tr_GTP-bd_dom"/>
</dbReference>
<dbReference type="InterPro" id="IPR009000">
    <property type="entry name" value="Transl_B-barrel_sf"/>
</dbReference>
<dbReference type="InterPro" id="IPR009001">
    <property type="entry name" value="Transl_elong_EF1A/Init_IF2_C"/>
</dbReference>
<dbReference type="InterPro" id="IPR004541">
    <property type="entry name" value="Transl_elong_EFTu/EF1A_bac/org"/>
</dbReference>
<dbReference type="InterPro" id="IPR004160">
    <property type="entry name" value="Transl_elong_EFTu/EF1A_C"/>
</dbReference>
<dbReference type="NCBIfam" id="TIGR00485">
    <property type="entry name" value="EF-Tu"/>
    <property type="match status" value="1"/>
</dbReference>
<dbReference type="NCBIfam" id="NF000766">
    <property type="entry name" value="PRK00049.1"/>
    <property type="match status" value="1"/>
</dbReference>
<dbReference type="NCBIfam" id="NF009372">
    <property type="entry name" value="PRK12735.1"/>
    <property type="match status" value="1"/>
</dbReference>
<dbReference type="NCBIfam" id="NF009373">
    <property type="entry name" value="PRK12736.1"/>
    <property type="match status" value="1"/>
</dbReference>
<dbReference type="NCBIfam" id="TIGR00231">
    <property type="entry name" value="small_GTP"/>
    <property type="match status" value="1"/>
</dbReference>
<dbReference type="PANTHER" id="PTHR43721:SF22">
    <property type="entry name" value="ELONGATION FACTOR TU, MITOCHONDRIAL"/>
    <property type="match status" value="1"/>
</dbReference>
<dbReference type="PANTHER" id="PTHR43721">
    <property type="entry name" value="ELONGATION FACTOR TU-RELATED"/>
    <property type="match status" value="1"/>
</dbReference>
<dbReference type="Pfam" id="PF00009">
    <property type="entry name" value="GTP_EFTU"/>
    <property type="match status" value="1"/>
</dbReference>
<dbReference type="Pfam" id="PF03144">
    <property type="entry name" value="GTP_EFTU_D2"/>
    <property type="match status" value="1"/>
</dbReference>
<dbReference type="Pfam" id="PF03143">
    <property type="entry name" value="GTP_EFTU_D3"/>
    <property type="match status" value="1"/>
</dbReference>
<dbReference type="PRINTS" id="PR00315">
    <property type="entry name" value="ELONGATNFCT"/>
</dbReference>
<dbReference type="SUPFAM" id="SSF50465">
    <property type="entry name" value="EF-Tu/eEF-1alpha/eIF2-gamma C-terminal domain"/>
    <property type="match status" value="1"/>
</dbReference>
<dbReference type="SUPFAM" id="SSF52540">
    <property type="entry name" value="P-loop containing nucleoside triphosphate hydrolases"/>
    <property type="match status" value="1"/>
</dbReference>
<dbReference type="SUPFAM" id="SSF50447">
    <property type="entry name" value="Translation proteins"/>
    <property type="match status" value="1"/>
</dbReference>
<dbReference type="PROSITE" id="PS00301">
    <property type="entry name" value="G_TR_1"/>
    <property type="match status" value="1"/>
</dbReference>
<dbReference type="PROSITE" id="PS51722">
    <property type="entry name" value="G_TR_2"/>
    <property type="match status" value="1"/>
</dbReference>
<gene>
    <name evidence="2" type="primary">tuf1</name>
    <name type="ordered locus">BURPS1710b_3778</name>
</gene>
<gene>
    <name evidence="2" type="primary">tuf2</name>
    <name type="ordered locus">BURPS1710b_3794</name>
</gene>
<organism>
    <name type="scientific">Burkholderia pseudomallei (strain 1710b)</name>
    <dbReference type="NCBI Taxonomy" id="320372"/>
    <lineage>
        <taxon>Bacteria</taxon>
        <taxon>Pseudomonadati</taxon>
        <taxon>Pseudomonadota</taxon>
        <taxon>Betaproteobacteria</taxon>
        <taxon>Burkholderiales</taxon>
        <taxon>Burkholderiaceae</taxon>
        <taxon>Burkholderia</taxon>
        <taxon>pseudomallei group</taxon>
    </lineage>
</organism>
<comment type="function">
    <text evidence="2">GTP hydrolase that promotes the GTP-dependent binding of aminoacyl-tRNA to the A-site of ribosomes during protein biosynthesis.</text>
</comment>
<comment type="catalytic activity">
    <reaction evidence="2">
        <text>GTP + H2O = GDP + phosphate + H(+)</text>
        <dbReference type="Rhea" id="RHEA:19669"/>
        <dbReference type="ChEBI" id="CHEBI:15377"/>
        <dbReference type="ChEBI" id="CHEBI:15378"/>
        <dbReference type="ChEBI" id="CHEBI:37565"/>
        <dbReference type="ChEBI" id="CHEBI:43474"/>
        <dbReference type="ChEBI" id="CHEBI:58189"/>
        <dbReference type="EC" id="3.6.5.3"/>
    </reaction>
    <physiologicalReaction direction="left-to-right" evidence="2">
        <dbReference type="Rhea" id="RHEA:19670"/>
    </physiologicalReaction>
</comment>
<comment type="subunit">
    <text evidence="2">Monomer.</text>
</comment>
<comment type="subcellular location">
    <subcellularLocation>
        <location evidence="2">Cytoplasm</location>
    </subcellularLocation>
</comment>
<comment type="similarity">
    <text evidence="2">Belongs to the TRAFAC class translation factor GTPase superfamily. Classic translation factor GTPase family. EF-Tu/EF-1A subfamily.</text>
</comment>
<reference key="1">
    <citation type="journal article" date="2010" name="Genome Biol. Evol.">
        <title>Continuing evolution of Burkholderia mallei through genome reduction and large-scale rearrangements.</title>
        <authorList>
            <person name="Losada L."/>
            <person name="Ronning C.M."/>
            <person name="DeShazer D."/>
            <person name="Woods D."/>
            <person name="Fedorova N."/>
            <person name="Kim H.S."/>
            <person name="Shabalina S.A."/>
            <person name="Pearson T.R."/>
            <person name="Brinkac L."/>
            <person name="Tan P."/>
            <person name="Nandi T."/>
            <person name="Crabtree J."/>
            <person name="Badger J."/>
            <person name="Beckstrom-Sternberg S."/>
            <person name="Saqib M."/>
            <person name="Schutzer S.E."/>
            <person name="Keim P."/>
            <person name="Nierman W.C."/>
        </authorList>
    </citation>
    <scope>NUCLEOTIDE SEQUENCE [LARGE SCALE GENOMIC DNA]</scope>
    <source>
        <strain>1710b</strain>
    </source>
</reference>